<feature type="chain" id="PRO_1000100755" description="Nicotinamide-nucleotide adenylyltransferase">
    <location>
        <begin position="1"/>
        <end position="168"/>
    </location>
</feature>
<reference key="1">
    <citation type="journal article" date="2009" name="Stand. Genomic Sci.">
        <title>Complete genome sequence of Methanocorpusculum labreanum type strain Z.</title>
        <authorList>
            <person name="Anderson I.J."/>
            <person name="Sieprawska-Lupa M."/>
            <person name="Goltsman E."/>
            <person name="Lapidus A."/>
            <person name="Copeland A."/>
            <person name="Glavina Del Rio T."/>
            <person name="Tice H."/>
            <person name="Dalin E."/>
            <person name="Barry K."/>
            <person name="Pitluck S."/>
            <person name="Hauser L."/>
            <person name="Land M."/>
            <person name="Lucas S."/>
            <person name="Richardson P."/>
            <person name="Whitman W.B."/>
            <person name="Kyrpides N.C."/>
        </authorList>
    </citation>
    <scope>NUCLEOTIDE SEQUENCE [LARGE SCALE GENOMIC DNA]</scope>
    <source>
        <strain>ATCC 43576 / DSM 4855 / Z</strain>
    </source>
</reference>
<name>NADM_METLZ</name>
<protein>
    <recommendedName>
        <fullName evidence="1">Nicotinamide-nucleotide adenylyltransferase</fullName>
        <ecNumber evidence="1">2.7.7.1</ecNumber>
    </recommendedName>
    <alternativeName>
        <fullName evidence="1">NAD(+) diphosphorylase</fullName>
    </alternativeName>
    <alternativeName>
        <fullName evidence="1">NAD(+) pyrophosphorylase</fullName>
    </alternativeName>
    <alternativeName>
        <fullName evidence="1">NMN adenylyltransferase</fullName>
    </alternativeName>
</protein>
<accession>A2SS82</accession>
<keyword id="KW-0067">ATP-binding</keyword>
<keyword id="KW-0963">Cytoplasm</keyword>
<keyword id="KW-0520">NAD</keyword>
<keyword id="KW-0547">Nucleotide-binding</keyword>
<keyword id="KW-0548">Nucleotidyltransferase</keyword>
<keyword id="KW-0662">Pyridine nucleotide biosynthesis</keyword>
<keyword id="KW-1185">Reference proteome</keyword>
<keyword id="KW-0808">Transferase</keyword>
<sequence length="168" mass="18905">MRRGLYVGRFQPFHNGHKAVIDGLAEEVDELIIGIGSADISHDIRHPFTAGERVLMITRALNGLKIPFYVIPLEDVKRNALWVAHVKSMVPPFDTVYTSNPLVIQLFKEAGIPVLSPPMYLRESLSGTAVRKKMYHGEAWEEYVPKEVVSVVGEIHGIERMQQISKSD</sequence>
<dbReference type="EC" id="2.7.7.1" evidence="1"/>
<dbReference type="EMBL" id="CP000559">
    <property type="protein sequence ID" value="ABN07188.1"/>
    <property type="molecule type" value="Genomic_DNA"/>
</dbReference>
<dbReference type="RefSeq" id="WP_011833391.1">
    <property type="nucleotide sequence ID" value="NC_008942.1"/>
</dbReference>
<dbReference type="SMR" id="A2SS82"/>
<dbReference type="STRING" id="410358.Mlab_1019"/>
<dbReference type="GeneID" id="4795184"/>
<dbReference type="KEGG" id="mla:Mlab_1019"/>
<dbReference type="eggNOG" id="arCOG00972">
    <property type="taxonomic scope" value="Archaea"/>
</dbReference>
<dbReference type="HOGENOM" id="CLU_108783_0_0_2"/>
<dbReference type="OrthoDB" id="264480at2157"/>
<dbReference type="UniPathway" id="UPA00253">
    <property type="reaction ID" value="UER00600"/>
</dbReference>
<dbReference type="Proteomes" id="UP000000365">
    <property type="component" value="Chromosome"/>
</dbReference>
<dbReference type="GO" id="GO:0005737">
    <property type="term" value="C:cytoplasm"/>
    <property type="evidence" value="ECO:0007669"/>
    <property type="project" value="UniProtKB-SubCell"/>
</dbReference>
<dbReference type="GO" id="GO:0005524">
    <property type="term" value="F:ATP binding"/>
    <property type="evidence" value="ECO:0007669"/>
    <property type="project" value="UniProtKB-KW"/>
</dbReference>
<dbReference type="GO" id="GO:0000309">
    <property type="term" value="F:nicotinamide-nucleotide adenylyltransferase activity"/>
    <property type="evidence" value="ECO:0007669"/>
    <property type="project" value="UniProtKB-UniRule"/>
</dbReference>
<dbReference type="GO" id="GO:0009435">
    <property type="term" value="P:NAD biosynthetic process"/>
    <property type="evidence" value="ECO:0007669"/>
    <property type="project" value="UniProtKB-UniRule"/>
</dbReference>
<dbReference type="Gene3D" id="3.40.50.620">
    <property type="entry name" value="HUPs"/>
    <property type="match status" value="1"/>
</dbReference>
<dbReference type="HAMAP" id="MF_00243">
    <property type="entry name" value="NMN_adenylyltr"/>
    <property type="match status" value="1"/>
</dbReference>
<dbReference type="InterPro" id="IPR004821">
    <property type="entry name" value="Cyt_trans-like"/>
</dbReference>
<dbReference type="InterPro" id="IPR006418">
    <property type="entry name" value="NMN_Atrans_arc"/>
</dbReference>
<dbReference type="InterPro" id="IPR014729">
    <property type="entry name" value="Rossmann-like_a/b/a_fold"/>
</dbReference>
<dbReference type="NCBIfam" id="TIGR01527">
    <property type="entry name" value="arch_NMN_Atrans"/>
    <property type="match status" value="1"/>
</dbReference>
<dbReference type="NCBIfam" id="TIGR00125">
    <property type="entry name" value="cyt_tran_rel"/>
    <property type="match status" value="1"/>
</dbReference>
<dbReference type="NCBIfam" id="NF002243">
    <property type="entry name" value="PRK01153.1"/>
    <property type="match status" value="1"/>
</dbReference>
<dbReference type="PANTHER" id="PTHR21342:SF0">
    <property type="entry name" value="BIFUNCTIONAL NMN ADENYLYLTRANSFERASE_NUDIX HYDROLASE"/>
    <property type="match status" value="1"/>
</dbReference>
<dbReference type="PANTHER" id="PTHR21342">
    <property type="entry name" value="PHOSPHOPANTETHEINE ADENYLYLTRANSFERASE"/>
    <property type="match status" value="1"/>
</dbReference>
<dbReference type="Pfam" id="PF01467">
    <property type="entry name" value="CTP_transf_like"/>
    <property type="match status" value="1"/>
</dbReference>
<dbReference type="SUPFAM" id="SSF52374">
    <property type="entry name" value="Nucleotidylyl transferase"/>
    <property type="match status" value="1"/>
</dbReference>
<gene>
    <name type="ordered locus">Mlab_1019</name>
</gene>
<proteinExistence type="inferred from homology"/>
<comment type="catalytic activity">
    <reaction evidence="1">
        <text>beta-nicotinamide D-ribonucleotide + ATP + H(+) = diphosphate + NAD(+)</text>
        <dbReference type="Rhea" id="RHEA:21360"/>
        <dbReference type="ChEBI" id="CHEBI:14649"/>
        <dbReference type="ChEBI" id="CHEBI:15378"/>
        <dbReference type="ChEBI" id="CHEBI:30616"/>
        <dbReference type="ChEBI" id="CHEBI:33019"/>
        <dbReference type="ChEBI" id="CHEBI:57540"/>
        <dbReference type="EC" id="2.7.7.1"/>
    </reaction>
</comment>
<comment type="pathway">
    <text evidence="1">Cofactor biosynthesis; NAD(+) biosynthesis; NAD(+) from nicotinamide D-ribonucleotide: step 1/1.</text>
</comment>
<comment type="subcellular location">
    <subcellularLocation>
        <location evidence="1">Cytoplasm</location>
    </subcellularLocation>
</comment>
<comment type="similarity">
    <text evidence="1">Belongs to the archaeal NMN adenylyltransferase family.</text>
</comment>
<evidence type="ECO:0000255" key="1">
    <source>
        <dbReference type="HAMAP-Rule" id="MF_00243"/>
    </source>
</evidence>
<organism>
    <name type="scientific">Methanocorpusculum labreanum (strain ATCC 43576 / DSM 4855 / Z)</name>
    <dbReference type="NCBI Taxonomy" id="410358"/>
    <lineage>
        <taxon>Archaea</taxon>
        <taxon>Methanobacteriati</taxon>
        <taxon>Methanobacteriota</taxon>
        <taxon>Stenosarchaea group</taxon>
        <taxon>Methanomicrobia</taxon>
        <taxon>Methanomicrobiales</taxon>
        <taxon>Methanocorpusculaceae</taxon>
        <taxon>Methanocorpusculum</taxon>
    </lineage>
</organism>